<name>RL9_SPHAL</name>
<organism>
    <name type="scientific">Sphingopyxis alaskensis (strain DSM 13593 / LMG 18877 / RB2256)</name>
    <name type="common">Sphingomonas alaskensis</name>
    <dbReference type="NCBI Taxonomy" id="317655"/>
    <lineage>
        <taxon>Bacteria</taxon>
        <taxon>Pseudomonadati</taxon>
        <taxon>Pseudomonadota</taxon>
        <taxon>Alphaproteobacteria</taxon>
        <taxon>Sphingomonadales</taxon>
        <taxon>Sphingomonadaceae</taxon>
        <taxon>Sphingopyxis</taxon>
    </lineage>
</organism>
<keyword id="KW-1185">Reference proteome</keyword>
<keyword id="KW-0687">Ribonucleoprotein</keyword>
<keyword id="KW-0689">Ribosomal protein</keyword>
<keyword id="KW-0694">RNA-binding</keyword>
<keyword id="KW-0699">rRNA-binding</keyword>
<comment type="function">
    <text evidence="1">Binds to the 23S rRNA.</text>
</comment>
<comment type="similarity">
    <text evidence="1">Belongs to the bacterial ribosomal protein bL9 family.</text>
</comment>
<accession>Q1GRV8</accession>
<feature type="chain" id="PRO_0000258490" description="Large ribosomal subunit protein bL9">
    <location>
        <begin position="1"/>
        <end position="210"/>
    </location>
</feature>
<feature type="region of interest" description="Disordered" evidence="2">
    <location>
        <begin position="172"/>
        <end position="210"/>
    </location>
</feature>
<feature type="compositionally biased region" description="Acidic residues" evidence="2">
    <location>
        <begin position="199"/>
        <end position="210"/>
    </location>
</feature>
<proteinExistence type="inferred from homology"/>
<evidence type="ECO:0000255" key="1">
    <source>
        <dbReference type="HAMAP-Rule" id="MF_00503"/>
    </source>
</evidence>
<evidence type="ECO:0000256" key="2">
    <source>
        <dbReference type="SAM" id="MobiDB-lite"/>
    </source>
</evidence>
<evidence type="ECO:0000305" key="3"/>
<dbReference type="EMBL" id="CP000356">
    <property type="protein sequence ID" value="ABF53614.1"/>
    <property type="molecule type" value="Genomic_DNA"/>
</dbReference>
<dbReference type="RefSeq" id="WP_011542191.1">
    <property type="nucleotide sequence ID" value="NC_008048.1"/>
</dbReference>
<dbReference type="SMR" id="Q1GRV8"/>
<dbReference type="STRING" id="317655.Sala_1902"/>
<dbReference type="KEGG" id="sal:Sala_1902"/>
<dbReference type="eggNOG" id="COG0359">
    <property type="taxonomic scope" value="Bacteria"/>
</dbReference>
<dbReference type="HOGENOM" id="CLU_078938_1_0_5"/>
<dbReference type="OrthoDB" id="9788336at2"/>
<dbReference type="Proteomes" id="UP000006578">
    <property type="component" value="Chromosome"/>
</dbReference>
<dbReference type="GO" id="GO:1990904">
    <property type="term" value="C:ribonucleoprotein complex"/>
    <property type="evidence" value="ECO:0007669"/>
    <property type="project" value="UniProtKB-KW"/>
</dbReference>
<dbReference type="GO" id="GO:0005840">
    <property type="term" value="C:ribosome"/>
    <property type="evidence" value="ECO:0007669"/>
    <property type="project" value="UniProtKB-KW"/>
</dbReference>
<dbReference type="GO" id="GO:0019843">
    <property type="term" value="F:rRNA binding"/>
    <property type="evidence" value="ECO:0007669"/>
    <property type="project" value="UniProtKB-UniRule"/>
</dbReference>
<dbReference type="GO" id="GO:0003735">
    <property type="term" value="F:structural constituent of ribosome"/>
    <property type="evidence" value="ECO:0007669"/>
    <property type="project" value="InterPro"/>
</dbReference>
<dbReference type="GO" id="GO:0006412">
    <property type="term" value="P:translation"/>
    <property type="evidence" value="ECO:0007669"/>
    <property type="project" value="UniProtKB-UniRule"/>
</dbReference>
<dbReference type="Gene3D" id="3.10.430.100">
    <property type="entry name" value="Ribosomal protein L9, C-terminal domain"/>
    <property type="match status" value="1"/>
</dbReference>
<dbReference type="Gene3D" id="3.40.5.10">
    <property type="entry name" value="Ribosomal protein L9, N-terminal domain"/>
    <property type="match status" value="1"/>
</dbReference>
<dbReference type="HAMAP" id="MF_00503">
    <property type="entry name" value="Ribosomal_bL9"/>
    <property type="match status" value="1"/>
</dbReference>
<dbReference type="InterPro" id="IPR000244">
    <property type="entry name" value="Ribosomal_bL9"/>
</dbReference>
<dbReference type="InterPro" id="IPR009027">
    <property type="entry name" value="Ribosomal_bL9/RNase_H1_N"/>
</dbReference>
<dbReference type="InterPro" id="IPR020594">
    <property type="entry name" value="Ribosomal_bL9_bac/chp"/>
</dbReference>
<dbReference type="InterPro" id="IPR020069">
    <property type="entry name" value="Ribosomal_bL9_C"/>
</dbReference>
<dbReference type="InterPro" id="IPR036791">
    <property type="entry name" value="Ribosomal_bL9_C_sf"/>
</dbReference>
<dbReference type="InterPro" id="IPR020070">
    <property type="entry name" value="Ribosomal_bL9_N"/>
</dbReference>
<dbReference type="InterPro" id="IPR036935">
    <property type="entry name" value="Ribosomal_bL9_N_sf"/>
</dbReference>
<dbReference type="NCBIfam" id="TIGR00158">
    <property type="entry name" value="L9"/>
    <property type="match status" value="1"/>
</dbReference>
<dbReference type="PANTHER" id="PTHR21368">
    <property type="entry name" value="50S RIBOSOMAL PROTEIN L9"/>
    <property type="match status" value="1"/>
</dbReference>
<dbReference type="Pfam" id="PF03948">
    <property type="entry name" value="Ribosomal_L9_C"/>
    <property type="match status" value="1"/>
</dbReference>
<dbReference type="Pfam" id="PF01281">
    <property type="entry name" value="Ribosomal_L9_N"/>
    <property type="match status" value="1"/>
</dbReference>
<dbReference type="SUPFAM" id="SSF55658">
    <property type="entry name" value="L9 N-domain-like"/>
    <property type="match status" value="1"/>
</dbReference>
<dbReference type="SUPFAM" id="SSF55653">
    <property type="entry name" value="Ribosomal protein L9 C-domain"/>
    <property type="match status" value="1"/>
</dbReference>
<dbReference type="PROSITE" id="PS00651">
    <property type="entry name" value="RIBOSOMAL_L9"/>
    <property type="match status" value="1"/>
</dbReference>
<sequence length="210" mass="22599">MEIILLERIEKLGGIGDVVTVKNGFARNYLLPNNKALRANEANRKLFEANRAKIEADNAERRSEAEGRAKDIDGKQIVLIRQASNTGQLYGSVSVRDIVDALAEDGVTGVTKSMVELERPIKSLGLVDVKVKLHPEVVVTVGVNVARSPDEAEMQSQGIDVIAAMFEEEQAEAAAAALEPDSEEEFEAATPPSELAAEASDEDADDAKEA</sequence>
<protein>
    <recommendedName>
        <fullName evidence="1">Large ribosomal subunit protein bL9</fullName>
    </recommendedName>
    <alternativeName>
        <fullName evidence="3">50S ribosomal protein L9</fullName>
    </alternativeName>
</protein>
<reference key="1">
    <citation type="journal article" date="2009" name="Proc. Natl. Acad. Sci. U.S.A.">
        <title>The genomic basis of trophic strategy in marine bacteria.</title>
        <authorList>
            <person name="Lauro F.M."/>
            <person name="McDougald D."/>
            <person name="Thomas T."/>
            <person name="Williams T.J."/>
            <person name="Egan S."/>
            <person name="Rice S."/>
            <person name="DeMaere M.Z."/>
            <person name="Ting L."/>
            <person name="Ertan H."/>
            <person name="Johnson J."/>
            <person name="Ferriera S."/>
            <person name="Lapidus A."/>
            <person name="Anderson I."/>
            <person name="Kyrpides N."/>
            <person name="Munk A.C."/>
            <person name="Detter C."/>
            <person name="Han C.S."/>
            <person name="Brown M.V."/>
            <person name="Robb F.T."/>
            <person name="Kjelleberg S."/>
            <person name="Cavicchioli R."/>
        </authorList>
    </citation>
    <scope>NUCLEOTIDE SEQUENCE [LARGE SCALE GENOMIC DNA]</scope>
    <source>
        <strain>DSM 13593 / LMG 18877 / RB2256</strain>
    </source>
</reference>
<gene>
    <name evidence="1" type="primary">rplI</name>
    <name type="ordered locus">Sala_1902</name>
</gene>